<proteinExistence type="inferred from homology"/>
<feature type="chain" id="PRO_0000255499" description="Small ribosomal subunit protein uS15">
    <location>
        <begin position="1"/>
        <end position="90"/>
    </location>
</feature>
<organism>
    <name type="scientific">Helicobacter pylori (strain HPAG1)</name>
    <dbReference type="NCBI Taxonomy" id="357544"/>
    <lineage>
        <taxon>Bacteria</taxon>
        <taxon>Pseudomonadati</taxon>
        <taxon>Campylobacterota</taxon>
        <taxon>Epsilonproteobacteria</taxon>
        <taxon>Campylobacterales</taxon>
        <taxon>Helicobacteraceae</taxon>
        <taxon>Helicobacter</taxon>
    </lineage>
</organism>
<gene>
    <name evidence="1" type="primary">rpsO</name>
    <name type="ordered locus">HPAG1_0407</name>
</gene>
<sequence>MALNLEKKQEIIKAFATKENDTGSCEVQVALLNERIKLLTEHLKANPKDHSSRLGLLKLVAQRRNLLKYIKRTNHARYVVLIEKLGIKDR</sequence>
<evidence type="ECO:0000255" key="1">
    <source>
        <dbReference type="HAMAP-Rule" id="MF_01343"/>
    </source>
</evidence>
<evidence type="ECO:0000305" key="2"/>
<protein>
    <recommendedName>
        <fullName evidence="1">Small ribosomal subunit protein uS15</fullName>
    </recommendedName>
    <alternativeName>
        <fullName evidence="2">30S ribosomal protein S15</fullName>
    </alternativeName>
</protein>
<reference key="1">
    <citation type="journal article" date="2006" name="Proc. Natl. Acad. Sci. U.S.A.">
        <title>The complete genome sequence of a chronic atrophic gastritis Helicobacter pylori strain: evolution during disease progression.</title>
        <authorList>
            <person name="Oh J.D."/>
            <person name="Kling-Baeckhed H."/>
            <person name="Giannakis M."/>
            <person name="Xu J."/>
            <person name="Fulton R.S."/>
            <person name="Fulton L.A."/>
            <person name="Cordum H.S."/>
            <person name="Wang C."/>
            <person name="Elliott G."/>
            <person name="Edwards J."/>
            <person name="Mardis E.R."/>
            <person name="Engstrand L.G."/>
            <person name="Gordon J.I."/>
        </authorList>
    </citation>
    <scope>NUCLEOTIDE SEQUENCE [LARGE SCALE GENOMIC DNA]</scope>
    <source>
        <strain>HPAG1</strain>
    </source>
</reference>
<comment type="function">
    <text evidence="1">One of the primary rRNA binding proteins, it binds directly to 16S rRNA where it helps nucleate assembly of the platform of the 30S subunit by binding and bridging several RNA helices of the 16S rRNA.</text>
</comment>
<comment type="function">
    <text evidence="1">Forms an intersubunit bridge (bridge B4) with the 23S rRNA of the 50S subunit in the ribosome.</text>
</comment>
<comment type="subunit">
    <text evidence="1">Part of the 30S ribosomal subunit. Forms a bridge to the 50S subunit in the 70S ribosome, contacting the 23S rRNA.</text>
</comment>
<comment type="similarity">
    <text evidence="1">Belongs to the universal ribosomal protein uS15 family.</text>
</comment>
<dbReference type="EMBL" id="CP000241">
    <property type="protein sequence ID" value="ABF84474.1"/>
    <property type="molecule type" value="Genomic_DNA"/>
</dbReference>
<dbReference type="RefSeq" id="WP_001207122.1">
    <property type="nucleotide sequence ID" value="NC_008086.1"/>
</dbReference>
<dbReference type="SMR" id="Q1CU98"/>
<dbReference type="KEGG" id="hpa:HPAG1_0407"/>
<dbReference type="HOGENOM" id="CLU_148518_0_0_7"/>
<dbReference type="GO" id="GO:0022627">
    <property type="term" value="C:cytosolic small ribosomal subunit"/>
    <property type="evidence" value="ECO:0007669"/>
    <property type="project" value="TreeGrafter"/>
</dbReference>
<dbReference type="GO" id="GO:0019843">
    <property type="term" value="F:rRNA binding"/>
    <property type="evidence" value="ECO:0007669"/>
    <property type="project" value="UniProtKB-UniRule"/>
</dbReference>
<dbReference type="GO" id="GO:0003735">
    <property type="term" value="F:structural constituent of ribosome"/>
    <property type="evidence" value="ECO:0007669"/>
    <property type="project" value="InterPro"/>
</dbReference>
<dbReference type="GO" id="GO:0006412">
    <property type="term" value="P:translation"/>
    <property type="evidence" value="ECO:0007669"/>
    <property type="project" value="UniProtKB-UniRule"/>
</dbReference>
<dbReference type="CDD" id="cd00353">
    <property type="entry name" value="Ribosomal_S15p_S13e"/>
    <property type="match status" value="1"/>
</dbReference>
<dbReference type="FunFam" id="1.10.287.10:FF:000002">
    <property type="entry name" value="30S ribosomal protein S15"/>
    <property type="match status" value="1"/>
</dbReference>
<dbReference type="Gene3D" id="6.10.250.3130">
    <property type="match status" value="1"/>
</dbReference>
<dbReference type="Gene3D" id="1.10.287.10">
    <property type="entry name" value="S15/NS1, RNA-binding"/>
    <property type="match status" value="1"/>
</dbReference>
<dbReference type="HAMAP" id="MF_01343_B">
    <property type="entry name" value="Ribosomal_uS15_B"/>
    <property type="match status" value="1"/>
</dbReference>
<dbReference type="InterPro" id="IPR000589">
    <property type="entry name" value="Ribosomal_uS15"/>
</dbReference>
<dbReference type="InterPro" id="IPR005290">
    <property type="entry name" value="Ribosomal_uS15_bac-type"/>
</dbReference>
<dbReference type="InterPro" id="IPR009068">
    <property type="entry name" value="uS15_NS1_RNA-bd_sf"/>
</dbReference>
<dbReference type="NCBIfam" id="TIGR00952">
    <property type="entry name" value="S15_bact"/>
    <property type="match status" value="1"/>
</dbReference>
<dbReference type="PANTHER" id="PTHR23321">
    <property type="entry name" value="RIBOSOMAL PROTEIN S15, BACTERIAL AND ORGANELLAR"/>
    <property type="match status" value="1"/>
</dbReference>
<dbReference type="PANTHER" id="PTHR23321:SF26">
    <property type="entry name" value="SMALL RIBOSOMAL SUBUNIT PROTEIN US15M"/>
    <property type="match status" value="1"/>
</dbReference>
<dbReference type="Pfam" id="PF00312">
    <property type="entry name" value="Ribosomal_S15"/>
    <property type="match status" value="1"/>
</dbReference>
<dbReference type="SMART" id="SM01387">
    <property type="entry name" value="Ribosomal_S15"/>
    <property type="match status" value="1"/>
</dbReference>
<dbReference type="SUPFAM" id="SSF47060">
    <property type="entry name" value="S15/NS1 RNA-binding domain"/>
    <property type="match status" value="1"/>
</dbReference>
<dbReference type="PROSITE" id="PS00362">
    <property type="entry name" value="RIBOSOMAL_S15"/>
    <property type="match status" value="1"/>
</dbReference>
<accession>Q1CU98</accession>
<keyword id="KW-0687">Ribonucleoprotein</keyword>
<keyword id="KW-0689">Ribosomal protein</keyword>
<keyword id="KW-0694">RNA-binding</keyword>
<keyword id="KW-0699">rRNA-binding</keyword>
<name>RS15_HELPH</name>